<reference key="1">
    <citation type="journal article" date="2009" name="J. Bacteriol.">
        <title>Complete genome sequence of the extremophilic Bacillus cereus strain Q1 with industrial applications.</title>
        <authorList>
            <person name="Xiong Z."/>
            <person name="Jiang Y."/>
            <person name="Qi D."/>
            <person name="Lu H."/>
            <person name="Yang F."/>
            <person name="Yang J."/>
            <person name="Chen L."/>
            <person name="Sun L."/>
            <person name="Xu X."/>
            <person name="Xue Y."/>
            <person name="Zhu Y."/>
            <person name="Jin Q."/>
        </authorList>
    </citation>
    <scope>NUCLEOTIDE SEQUENCE [LARGE SCALE GENOMIC DNA]</scope>
    <source>
        <strain>Q1</strain>
    </source>
</reference>
<sequence length="90" mass="10118">MAVKIRLKRMGAKKTPFYRVVVADSRSPRDGRFIEEIGTYNPVAQPAEVKINEEAALKWLGNGAKPSDTVRNLFSNQGIMEKFHLSKQGK</sequence>
<protein>
    <recommendedName>
        <fullName evidence="1">Small ribosomal subunit protein bS16</fullName>
    </recommendedName>
    <alternativeName>
        <fullName evidence="2">30S ribosomal protein S16</fullName>
    </alternativeName>
</protein>
<keyword id="KW-0687">Ribonucleoprotein</keyword>
<keyword id="KW-0689">Ribosomal protein</keyword>
<name>RS16_BACCQ</name>
<organism>
    <name type="scientific">Bacillus cereus (strain Q1)</name>
    <dbReference type="NCBI Taxonomy" id="361100"/>
    <lineage>
        <taxon>Bacteria</taxon>
        <taxon>Bacillati</taxon>
        <taxon>Bacillota</taxon>
        <taxon>Bacilli</taxon>
        <taxon>Bacillales</taxon>
        <taxon>Bacillaceae</taxon>
        <taxon>Bacillus</taxon>
        <taxon>Bacillus cereus group</taxon>
    </lineage>
</organism>
<gene>
    <name evidence="1" type="primary">rpsP</name>
    <name type="ordered locus">BCQ_3629</name>
</gene>
<accession>B9IVD3</accession>
<feature type="chain" id="PRO_1000196335" description="Small ribosomal subunit protein bS16">
    <location>
        <begin position="1"/>
        <end position="90"/>
    </location>
</feature>
<comment type="similarity">
    <text evidence="1">Belongs to the bacterial ribosomal protein bS16 family.</text>
</comment>
<dbReference type="EMBL" id="CP000227">
    <property type="protein sequence ID" value="ACM14057.1"/>
    <property type="molecule type" value="Genomic_DNA"/>
</dbReference>
<dbReference type="SMR" id="B9IVD3"/>
<dbReference type="KEGG" id="bcq:BCQ_3629"/>
<dbReference type="HOGENOM" id="CLU_100590_5_0_9"/>
<dbReference type="Proteomes" id="UP000000441">
    <property type="component" value="Chromosome"/>
</dbReference>
<dbReference type="GO" id="GO:0005737">
    <property type="term" value="C:cytoplasm"/>
    <property type="evidence" value="ECO:0007669"/>
    <property type="project" value="UniProtKB-ARBA"/>
</dbReference>
<dbReference type="GO" id="GO:0015935">
    <property type="term" value="C:small ribosomal subunit"/>
    <property type="evidence" value="ECO:0007669"/>
    <property type="project" value="TreeGrafter"/>
</dbReference>
<dbReference type="GO" id="GO:0003735">
    <property type="term" value="F:structural constituent of ribosome"/>
    <property type="evidence" value="ECO:0007669"/>
    <property type="project" value="InterPro"/>
</dbReference>
<dbReference type="GO" id="GO:0006412">
    <property type="term" value="P:translation"/>
    <property type="evidence" value="ECO:0007669"/>
    <property type="project" value="UniProtKB-UniRule"/>
</dbReference>
<dbReference type="FunFam" id="3.30.1320.10:FF:000002">
    <property type="entry name" value="30S ribosomal protein S16"/>
    <property type="match status" value="1"/>
</dbReference>
<dbReference type="Gene3D" id="3.30.1320.10">
    <property type="match status" value="1"/>
</dbReference>
<dbReference type="HAMAP" id="MF_00385">
    <property type="entry name" value="Ribosomal_bS16"/>
    <property type="match status" value="1"/>
</dbReference>
<dbReference type="InterPro" id="IPR000307">
    <property type="entry name" value="Ribosomal_bS16"/>
</dbReference>
<dbReference type="InterPro" id="IPR020592">
    <property type="entry name" value="Ribosomal_bS16_CS"/>
</dbReference>
<dbReference type="InterPro" id="IPR023803">
    <property type="entry name" value="Ribosomal_bS16_dom_sf"/>
</dbReference>
<dbReference type="NCBIfam" id="TIGR00002">
    <property type="entry name" value="S16"/>
    <property type="match status" value="1"/>
</dbReference>
<dbReference type="PANTHER" id="PTHR12919">
    <property type="entry name" value="30S RIBOSOMAL PROTEIN S16"/>
    <property type="match status" value="1"/>
</dbReference>
<dbReference type="PANTHER" id="PTHR12919:SF20">
    <property type="entry name" value="SMALL RIBOSOMAL SUBUNIT PROTEIN BS16M"/>
    <property type="match status" value="1"/>
</dbReference>
<dbReference type="Pfam" id="PF00886">
    <property type="entry name" value="Ribosomal_S16"/>
    <property type="match status" value="1"/>
</dbReference>
<dbReference type="SUPFAM" id="SSF54565">
    <property type="entry name" value="Ribosomal protein S16"/>
    <property type="match status" value="1"/>
</dbReference>
<dbReference type="PROSITE" id="PS00732">
    <property type="entry name" value="RIBOSOMAL_S16"/>
    <property type="match status" value="1"/>
</dbReference>
<evidence type="ECO:0000255" key="1">
    <source>
        <dbReference type="HAMAP-Rule" id="MF_00385"/>
    </source>
</evidence>
<evidence type="ECO:0000305" key="2"/>
<proteinExistence type="inferred from homology"/>